<organism>
    <name type="scientific">Bacillus anthracis (strain CDC 684 / NRRL 3495)</name>
    <dbReference type="NCBI Taxonomy" id="568206"/>
    <lineage>
        <taxon>Bacteria</taxon>
        <taxon>Bacillati</taxon>
        <taxon>Bacillota</taxon>
        <taxon>Bacilli</taxon>
        <taxon>Bacillales</taxon>
        <taxon>Bacillaceae</taxon>
        <taxon>Bacillus</taxon>
        <taxon>Bacillus cereus group</taxon>
    </lineage>
</organism>
<reference key="1">
    <citation type="submission" date="2008-10" db="EMBL/GenBank/DDBJ databases">
        <title>Genome sequence of Bacillus anthracis str. CDC 684.</title>
        <authorList>
            <person name="Dodson R.J."/>
            <person name="Munk A.C."/>
            <person name="Brettin T."/>
            <person name="Bruce D."/>
            <person name="Detter C."/>
            <person name="Tapia R."/>
            <person name="Han C."/>
            <person name="Sutton G."/>
            <person name="Sims D."/>
        </authorList>
    </citation>
    <scope>NUCLEOTIDE SEQUENCE [LARGE SCALE GENOMIC DNA]</scope>
    <source>
        <strain>CDC 684 / NRRL 3495</strain>
    </source>
</reference>
<sequence>MRILGLDVGTKTVGVAISDEMGWTAQGLETIKINEERGQFGFDRISELVKQYDVDKIVVGLPKNMNGTIGPRGEACQQFAENLRELLQLDVVMWDERLSTMAAERLLISADVSRKKRKQVIDKMAAVVILQGFLDSK</sequence>
<accession>C3L5Z2</accession>
<proteinExistence type="inferred from homology"/>
<comment type="function">
    <text evidence="1">Could be a nuclease involved in processing of the 5'-end of pre-16S rRNA.</text>
</comment>
<comment type="subcellular location">
    <subcellularLocation>
        <location evidence="1">Cytoplasm</location>
    </subcellularLocation>
</comment>
<comment type="similarity">
    <text evidence="1">Belongs to the YqgF nuclease family.</text>
</comment>
<evidence type="ECO:0000255" key="1">
    <source>
        <dbReference type="HAMAP-Rule" id="MF_00651"/>
    </source>
</evidence>
<keyword id="KW-0963">Cytoplasm</keyword>
<keyword id="KW-0378">Hydrolase</keyword>
<keyword id="KW-0540">Nuclease</keyword>
<keyword id="KW-0690">Ribosome biogenesis</keyword>
<name>YQGF_BACAC</name>
<protein>
    <recommendedName>
        <fullName evidence="1">Putative pre-16S rRNA nuclease</fullName>
        <ecNumber evidence="1">3.1.-.-</ecNumber>
    </recommendedName>
</protein>
<gene>
    <name type="ordered locus">BAMEG_4651</name>
</gene>
<feature type="chain" id="PRO_1000147460" description="Putative pre-16S rRNA nuclease">
    <location>
        <begin position="1"/>
        <end position="137"/>
    </location>
</feature>
<dbReference type="EC" id="3.1.-.-" evidence="1"/>
<dbReference type="EMBL" id="CP001215">
    <property type="protein sequence ID" value="ACP17235.1"/>
    <property type="molecule type" value="Genomic_DNA"/>
</dbReference>
<dbReference type="SMR" id="C3L5Z2"/>
<dbReference type="KEGG" id="bah:BAMEG_4651"/>
<dbReference type="HOGENOM" id="CLU_098240_2_0_9"/>
<dbReference type="GO" id="GO:0005829">
    <property type="term" value="C:cytosol"/>
    <property type="evidence" value="ECO:0007669"/>
    <property type="project" value="TreeGrafter"/>
</dbReference>
<dbReference type="GO" id="GO:0004518">
    <property type="term" value="F:nuclease activity"/>
    <property type="evidence" value="ECO:0007669"/>
    <property type="project" value="UniProtKB-KW"/>
</dbReference>
<dbReference type="GO" id="GO:0000967">
    <property type="term" value="P:rRNA 5'-end processing"/>
    <property type="evidence" value="ECO:0007669"/>
    <property type="project" value="UniProtKB-UniRule"/>
</dbReference>
<dbReference type="CDD" id="cd16964">
    <property type="entry name" value="YqgF"/>
    <property type="match status" value="1"/>
</dbReference>
<dbReference type="FunFam" id="3.30.420.140:FF:000003">
    <property type="entry name" value="Putative pre-16S rRNA nuclease"/>
    <property type="match status" value="1"/>
</dbReference>
<dbReference type="Gene3D" id="3.30.420.140">
    <property type="entry name" value="YqgF/RNase H-like domain"/>
    <property type="match status" value="1"/>
</dbReference>
<dbReference type="HAMAP" id="MF_00651">
    <property type="entry name" value="Nuclease_YqgF"/>
    <property type="match status" value="1"/>
</dbReference>
<dbReference type="InterPro" id="IPR012337">
    <property type="entry name" value="RNaseH-like_sf"/>
</dbReference>
<dbReference type="InterPro" id="IPR005227">
    <property type="entry name" value="YqgF"/>
</dbReference>
<dbReference type="InterPro" id="IPR006641">
    <property type="entry name" value="YqgF/RNaseH-like_dom"/>
</dbReference>
<dbReference type="InterPro" id="IPR037027">
    <property type="entry name" value="YqgF/RNaseH-like_dom_sf"/>
</dbReference>
<dbReference type="NCBIfam" id="TIGR00250">
    <property type="entry name" value="RNAse_H_YqgF"/>
    <property type="match status" value="1"/>
</dbReference>
<dbReference type="PANTHER" id="PTHR33317">
    <property type="entry name" value="POLYNUCLEOTIDYL TRANSFERASE, RIBONUCLEASE H-LIKE SUPERFAMILY PROTEIN"/>
    <property type="match status" value="1"/>
</dbReference>
<dbReference type="PANTHER" id="PTHR33317:SF4">
    <property type="entry name" value="POLYNUCLEOTIDYL TRANSFERASE, RIBONUCLEASE H-LIKE SUPERFAMILY PROTEIN"/>
    <property type="match status" value="1"/>
</dbReference>
<dbReference type="Pfam" id="PF03652">
    <property type="entry name" value="RuvX"/>
    <property type="match status" value="1"/>
</dbReference>
<dbReference type="SMART" id="SM00732">
    <property type="entry name" value="YqgFc"/>
    <property type="match status" value="1"/>
</dbReference>
<dbReference type="SUPFAM" id="SSF53098">
    <property type="entry name" value="Ribonuclease H-like"/>
    <property type="match status" value="1"/>
</dbReference>